<gene>
    <name evidence="1" type="primary">mltF</name>
    <name type="ordered locus">Tbd_1230</name>
</gene>
<comment type="function">
    <text evidence="1">Murein-degrading enzyme that degrades murein glycan strands and insoluble, high-molecular weight murein sacculi, with the concomitant formation of a 1,6-anhydromuramoyl product. Lytic transglycosylases (LTs) play an integral role in the metabolism of the peptidoglycan (PG) sacculus. Their lytic action creates space within the PG sacculus to allow for its expansion as well as for the insertion of various structures such as secretion systems and flagella.</text>
</comment>
<comment type="catalytic activity">
    <reaction evidence="1">
        <text>Exolytic cleavage of the (1-&gt;4)-beta-glycosidic linkage between N-acetylmuramic acid (MurNAc) and N-acetylglucosamine (GlcNAc) residues in peptidoglycan, from either the reducing or the non-reducing ends of the peptidoglycan chains, with concomitant formation of a 1,6-anhydrobond in the MurNAc residue.</text>
        <dbReference type="EC" id="4.2.2.n1"/>
    </reaction>
</comment>
<comment type="subcellular location">
    <subcellularLocation>
        <location>Cell outer membrane</location>
        <topology>Peripheral membrane protein</topology>
    </subcellularLocation>
    <text evidence="1">Attached to the inner leaflet of the outer membrane.</text>
</comment>
<comment type="domain">
    <text evidence="1">The N-terminal domain does not have lytic activity and probably modulates enzymatic activity. The C-terminal domain is the catalytic active domain.</text>
</comment>
<comment type="similarity">
    <text evidence="1">In the N-terminal section; belongs to the bacterial solute-binding protein 3 family.</text>
</comment>
<comment type="similarity">
    <text evidence="1">In the C-terminal section; belongs to the transglycosylase Slt family.</text>
</comment>
<accession>Q3SJH8</accession>
<dbReference type="EC" id="4.2.2.n1" evidence="1"/>
<dbReference type="EMBL" id="CP000116">
    <property type="protein sequence ID" value="AAZ97183.1"/>
    <property type="molecule type" value="Genomic_DNA"/>
</dbReference>
<dbReference type="RefSeq" id="WP_011311742.1">
    <property type="nucleotide sequence ID" value="NC_007404.1"/>
</dbReference>
<dbReference type="SMR" id="Q3SJH8"/>
<dbReference type="STRING" id="292415.Tbd_1230"/>
<dbReference type="CAZy" id="GH23">
    <property type="family name" value="Glycoside Hydrolase Family 23"/>
</dbReference>
<dbReference type="KEGG" id="tbd:Tbd_1230"/>
<dbReference type="eggNOG" id="COG4623">
    <property type="taxonomic scope" value="Bacteria"/>
</dbReference>
<dbReference type="HOGENOM" id="CLU_027494_0_1_4"/>
<dbReference type="OrthoDB" id="9815002at2"/>
<dbReference type="Proteomes" id="UP000008291">
    <property type="component" value="Chromosome"/>
</dbReference>
<dbReference type="GO" id="GO:0009279">
    <property type="term" value="C:cell outer membrane"/>
    <property type="evidence" value="ECO:0007669"/>
    <property type="project" value="UniProtKB-SubCell"/>
</dbReference>
<dbReference type="GO" id="GO:0008933">
    <property type="term" value="F:peptidoglycan lytic transglycosylase activity"/>
    <property type="evidence" value="ECO:0007669"/>
    <property type="project" value="UniProtKB-UniRule"/>
</dbReference>
<dbReference type="GO" id="GO:0016998">
    <property type="term" value="P:cell wall macromolecule catabolic process"/>
    <property type="evidence" value="ECO:0007669"/>
    <property type="project" value="UniProtKB-UniRule"/>
</dbReference>
<dbReference type="GO" id="GO:0071555">
    <property type="term" value="P:cell wall organization"/>
    <property type="evidence" value="ECO:0007669"/>
    <property type="project" value="UniProtKB-KW"/>
</dbReference>
<dbReference type="CDD" id="cd13403">
    <property type="entry name" value="MLTF-like"/>
    <property type="match status" value="1"/>
</dbReference>
<dbReference type="CDD" id="cd01009">
    <property type="entry name" value="PBP2_YfhD_N"/>
    <property type="match status" value="1"/>
</dbReference>
<dbReference type="Gene3D" id="1.10.530.10">
    <property type="match status" value="1"/>
</dbReference>
<dbReference type="Gene3D" id="3.40.190.10">
    <property type="entry name" value="Periplasmic binding protein-like II"/>
    <property type="match status" value="2"/>
</dbReference>
<dbReference type="HAMAP" id="MF_02016">
    <property type="entry name" value="MltF"/>
    <property type="match status" value="1"/>
</dbReference>
<dbReference type="InterPro" id="IPR023346">
    <property type="entry name" value="Lysozyme-like_dom_sf"/>
</dbReference>
<dbReference type="InterPro" id="IPR023703">
    <property type="entry name" value="MltF"/>
</dbReference>
<dbReference type="InterPro" id="IPR001638">
    <property type="entry name" value="Solute-binding_3/MltF_N"/>
</dbReference>
<dbReference type="InterPro" id="IPR008258">
    <property type="entry name" value="Transglycosylase_SLT_dom_1"/>
</dbReference>
<dbReference type="NCBIfam" id="NF008112">
    <property type="entry name" value="PRK10859.1"/>
    <property type="match status" value="1"/>
</dbReference>
<dbReference type="PANTHER" id="PTHR35936">
    <property type="entry name" value="MEMBRANE-BOUND LYTIC MUREIN TRANSGLYCOSYLASE F"/>
    <property type="match status" value="1"/>
</dbReference>
<dbReference type="PANTHER" id="PTHR35936:SF32">
    <property type="entry name" value="MEMBRANE-BOUND LYTIC MUREIN TRANSGLYCOSYLASE F"/>
    <property type="match status" value="1"/>
</dbReference>
<dbReference type="Pfam" id="PF00497">
    <property type="entry name" value="SBP_bac_3"/>
    <property type="match status" value="1"/>
</dbReference>
<dbReference type="Pfam" id="PF01464">
    <property type="entry name" value="SLT"/>
    <property type="match status" value="1"/>
</dbReference>
<dbReference type="SMART" id="SM00062">
    <property type="entry name" value="PBPb"/>
    <property type="match status" value="1"/>
</dbReference>
<dbReference type="SUPFAM" id="SSF53955">
    <property type="entry name" value="Lysozyme-like"/>
    <property type="match status" value="1"/>
</dbReference>
<dbReference type="SUPFAM" id="SSF53850">
    <property type="entry name" value="Periplasmic binding protein-like II"/>
    <property type="match status" value="1"/>
</dbReference>
<dbReference type="PROSITE" id="PS51257">
    <property type="entry name" value="PROKAR_LIPOPROTEIN"/>
    <property type="match status" value="1"/>
</dbReference>
<evidence type="ECO:0000255" key="1">
    <source>
        <dbReference type="HAMAP-Rule" id="MF_02016"/>
    </source>
</evidence>
<protein>
    <recommendedName>
        <fullName evidence="1">Membrane-bound lytic murein transglycosylase F</fullName>
        <ecNumber evidence="1">4.2.2.n1</ecNumber>
    </recommendedName>
    <alternativeName>
        <fullName evidence="1">Murein lyase F</fullName>
    </alternativeName>
</protein>
<sequence>MPSLKTKGAAGKFASLLLVLALSACSRPAPPPETSGELRVGTRNSPATFYIGHDGETAGFEHDLILAFSRAQNWTLSWTEKSRPQALFDMLERREIHLAAAALPQAVVKDRHLISGPILFETPVHVVYRTADRAPRGVAGLAGKKLAFIIGSGHGPMLMRLKRKHPELSWAAVENVWPEELLAQLQAGKYDAVIINGMDFDAMRNFYPGLAVAFDLPYKQKIVWALSPGSSHAFRNALARFVERARSDGTIKRALERYFGHVKRLGSSDILGILQRRPQRLPDLREHFQEAQTLSGIDWRLLAAIGYQESQWNRLATSPTGVRGVMMLTGETADRMGVSDRLNARESILGGARYLALLKDALPARIAEPDRTWLALAAYNQGQGHLEDARRIAQARGGDPNSWADVKEALPYLSRGSYAKVMKYGYARGGEALRFAENIRNYYDILLRLEPEYDPLINLGRGEDGLPPPG</sequence>
<feature type="signal peptide" evidence="1">
    <location>
        <begin position="1"/>
        <end position="24"/>
    </location>
</feature>
<feature type="chain" id="PRO_5000103386" description="Membrane-bound lytic murein transglycosylase F">
    <location>
        <begin position="25"/>
        <end position="470"/>
    </location>
</feature>
<feature type="region of interest" description="Non-LT domain" evidence="1">
    <location>
        <begin position="25"/>
        <end position="262"/>
    </location>
</feature>
<feature type="region of interest" description="LT domain" evidence="1">
    <location>
        <begin position="263"/>
        <end position="470"/>
    </location>
</feature>
<feature type="active site" evidence="1">
    <location>
        <position position="309"/>
    </location>
</feature>
<keyword id="KW-0998">Cell outer membrane</keyword>
<keyword id="KW-0961">Cell wall biogenesis/degradation</keyword>
<keyword id="KW-0456">Lyase</keyword>
<keyword id="KW-0472">Membrane</keyword>
<keyword id="KW-1185">Reference proteome</keyword>
<keyword id="KW-0732">Signal</keyword>
<organism>
    <name type="scientific">Thiobacillus denitrificans (strain ATCC 25259 / T1)</name>
    <dbReference type="NCBI Taxonomy" id="292415"/>
    <lineage>
        <taxon>Bacteria</taxon>
        <taxon>Pseudomonadati</taxon>
        <taxon>Pseudomonadota</taxon>
        <taxon>Betaproteobacteria</taxon>
        <taxon>Nitrosomonadales</taxon>
        <taxon>Thiobacillaceae</taxon>
        <taxon>Thiobacillus</taxon>
    </lineage>
</organism>
<reference key="1">
    <citation type="journal article" date="2006" name="J. Bacteriol.">
        <title>The genome sequence of the obligately chemolithoautotrophic, facultatively anaerobic bacterium Thiobacillus denitrificans.</title>
        <authorList>
            <person name="Beller H.R."/>
            <person name="Chain P.S."/>
            <person name="Letain T.E."/>
            <person name="Chakicherla A."/>
            <person name="Larimer F.W."/>
            <person name="Richardson P.M."/>
            <person name="Coleman M.A."/>
            <person name="Wood A.P."/>
            <person name="Kelly D.P."/>
        </authorList>
    </citation>
    <scope>NUCLEOTIDE SEQUENCE [LARGE SCALE GENOMIC DNA]</scope>
    <source>
        <strain>ATCC 25259 / T1</strain>
    </source>
</reference>
<name>MLTF_THIDA</name>
<proteinExistence type="inferred from homology"/>